<protein>
    <recommendedName>
        <fullName>Cytochrome c oxidase subunit 2</fullName>
        <ecNumber>7.1.1.9</ecNumber>
    </recommendedName>
    <alternativeName>
        <fullName>Cytochrome c oxidase polypeptide II</fullName>
    </alternativeName>
</protein>
<keyword id="KW-0186">Copper</keyword>
<keyword id="KW-0249">Electron transport</keyword>
<keyword id="KW-0460">Magnesium</keyword>
<keyword id="KW-0472">Membrane</keyword>
<keyword id="KW-0479">Metal-binding</keyword>
<keyword id="KW-0496">Mitochondrion</keyword>
<keyword id="KW-0999">Mitochondrion inner membrane</keyword>
<keyword id="KW-0679">Respiratory chain</keyword>
<keyword id="KW-1278">Translocase</keyword>
<keyword id="KW-0812">Transmembrane</keyword>
<keyword id="KW-1133">Transmembrane helix</keyword>
<keyword id="KW-0813">Transport</keyword>
<name>COX2_HALGR</name>
<geneLocation type="mitochondrion"/>
<dbReference type="EC" id="7.1.1.9"/>
<dbReference type="EMBL" id="X72004">
    <property type="protein sequence ID" value="CAA50880.1"/>
    <property type="molecule type" value="Genomic_DNA"/>
</dbReference>
<dbReference type="PIR" id="S41838">
    <property type="entry name" value="S41838"/>
</dbReference>
<dbReference type="RefSeq" id="NP_007072.1">
    <property type="nucleotide sequence ID" value="NC_001602.1"/>
</dbReference>
<dbReference type="SMR" id="P38596"/>
<dbReference type="GeneID" id="807754"/>
<dbReference type="CTD" id="4513"/>
<dbReference type="GO" id="GO:0005743">
    <property type="term" value="C:mitochondrial inner membrane"/>
    <property type="evidence" value="ECO:0007669"/>
    <property type="project" value="UniProtKB-SubCell"/>
</dbReference>
<dbReference type="GO" id="GO:0045277">
    <property type="term" value="C:respiratory chain complex IV"/>
    <property type="evidence" value="ECO:0000250"/>
    <property type="project" value="UniProtKB"/>
</dbReference>
<dbReference type="GO" id="GO:0005507">
    <property type="term" value="F:copper ion binding"/>
    <property type="evidence" value="ECO:0007669"/>
    <property type="project" value="InterPro"/>
</dbReference>
<dbReference type="GO" id="GO:0004129">
    <property type="term" value="F:cytochrome-c oxidase activity"/>
    <property type="evidence" value="ECO:0007669"/>
    <property type="project" value="UniProtKB-EC"/>
</dbReference>
<dbReference type="GO" id="GO:0042773">
    <property type="term" value="P:ATP synthesis coupled electron transport"/>
    <property type="evidence" value="ECO:0007669"/>
    <property type="project" value="TreeGrafter"/>
</dbReference>
<dbReference type="CDD" id="cd13912">
    <property type="entry name" value="CcO_II_C"/>
    <property type="match status" value="1"/>
</dbReference>
<dbReference type="FunFam" id="1.10.287.90:FF:000001">
    <property type="entry name" value="Cytochrome c oxidase subunit 2"/>
    <property type="match status" value="1"/>
</dbReference>
<dbReference type="FunFam" id="2.60.40.420:FF:000001">
    <property type="entry name" value="Cytochrome c oxidase subunit 2"/>
    <property type="match status" value="1"/>
</dbReference>
<dbReference type="Gene3D" id="1.10.287.90">
    <property type="match status" value="1"/>
</dbReference>
<dbReference type="Gene3D" id="2.60.40.420">
    <property type="entry name" value="Cupredoxins - blue copper proteins"/>
    <property type="match status" value="1"/>
</dbReference>
<dbReference type="InterPro" id="IPR045187">
    <property type="entry name" value="CcO_II"/>
</dbReference>
<dbReference type="InterPro" id="IPR002429">
    <property type="entry name" value="CcO_II-like_C"/>
</dbReference>
<dbReference type="InterPro" id="IPR034210">
    <property type="entry name" value="CcO_II_C"/>
</dbReference>
<dbReference type="InterPro" id="IPR001505">
    <property type="entry name" value="Copper_CuA"/>
</dbReference>
<dbReference type="InterPro" id="IPR008972">
    <property type="entry name" value="Cupredoxin"/>
</dbReference>
<dbReference type="InterPro" id="IPR014222">
    <property type="entry name" value="Cyt_c_oxidase_su2"/>
</dbReference>
<dbReference type="InterPro" id="IPR011759">
    <property type="entry name" value="Cyt_c_oxidase_su2_TM_dom"/>
</dbReference>
<dbReference type="InterPro" id="IPR036257">
    <property type="entry name" value="Cyt_c_oxidase_su2_TM_sf"/>
</dbReference>
<dbReference type="NCBIfam" id="TIGR02866">
    <property type="entry name" value="CoxB"/>
    <property type="match status" value="1"/>
</dbReference>
<dbReference type="PANTHER" id="PTHR22888:SF9">
    <property type="entry name" value="CYTOCHROME C OXIDASE SUBUNIT 2"/>
    <property type="match status" value="1"/>
</dbReference>
<dbReference type="PANTHER" id="PTHR22888">
    <property type="entry name" value="CYTOCHROME C OXIDASE, SUBUNIT II"/>
    <property type="match status" value="1"/>
</dbReference>
<dbReference type="Pfam" id="PF00116">
    <property type="entry name" value="COX2"/>
    <property type="match status" value="1"/>
</dbReference>
<dbReference type="Pfam" id="PF02790">
    <property type="entry name" value="COX2_TM"/>
    <property type="match status" value="1"/>
</dbReference>
<dbReference type="PRINTS" id="PR01166">
    <property type="entry name" value="CYCOXIDASEII"/>
</dbReference>
<dbReference type="SUPFAM" id="SSF49503">
    <property type="entry name" value="Cupredoxins"/>
    <property type="match status" value="1"/>
</dbReference>
<dbReference type="SUPFAM" id="SSF81464">
    <property type="entry name" value="Cytochrome c oxidase subunit II-like, transmembrane region"/>
    <property type="match status" value="1"/>
</dbReference>
<dbReference type="PROSITE" id="PS00078">
    <property type="entry name" value="COX2"/>
    <property type="match status" value="1"/>
</dbReference>
<dbReference type="PROSITE" id="PS50857">
    <property type="entry name" value="COX2_CUA"/>
    <property type="match status" value="1"/>
</dbReference>
<dbReference type="PROSITE" id="PS50999">
    <property type="entry name" value="COX2_TM"/>
    <property type="match status" value="1"/>
</dbReference>
<reference key="1">
    <citation type="journal article" date="1993" name="J. Mol. Evol.">
        <title>The nucleotide sequence of the mitochondrial DNA molecule of the grey seal, Halichoerus grypus, and a comparison with mitochondrial sequences of other true seals.</title>
        <authorList>
            <person name="Arnason U."/>
            <person name="Gullberg A."/>
            <person name="Johnsson E."/>
            <person name="Ledje C."/>
        </authorList>
    </citation>
    <scope>NUCLEOTIDE SEQUENCE [GENOMIC DNA]</scope>
</reference>
<evidence type="ECO:0000250" key="1">
    <source>
        <dbReference type="UniProtKB" id="P00403"/>
    </source>
</evidence>
<evidence type="ECO:0000250" key="2">
    <source>
        <dbReference type="UniProtKB" id="P00410"/>
    </source>
</evidence>
<evidence type="ECO:0000250" key="3">
    <source>
        <dbReference type="UniProtKB" id="P68530"/>
    </source>
</evidence>
<evidence type="ECO:0000305" key="4"/>
<accession>P38596</accession>
<organism>
    <name type="scientific">Halichoerus grypus</name>
    <name type="common">Gray seal</name>
    <name type="synonym">Phoca grypus</name>
    <dbReference type="NCBI Taxonomy" id="9711"/>
    <lineage>
        <taxon>Eukaryota</taxon>
        <taxon>Metazoa</taxon>
        <taxon>Chordata</taxon>
        <taxon>Craniata</taxon>
        <taxon>Vertebrata</taxon>
        <taxon>Euteleostomi</taxon>
        <taxon>Mammalia</taxon>
        <taxon>Eutheria</taxon>
        <taxon>Laurasiatheria</taxon>
        <taxon>Carnivora</taxon>
        <taxon>Caniformia</taxon>
        <taxon>Pinnipedia</taxon>
        <taxon>Phocidae</taxon>
        <taxon>Phocinae</taxon>
        <taxon>Halichoerus</taxon>
    </lineage>
</organism>
<proteinExistence type="inferred from homology"/>
<gene>
    <name type="primary">MT-CO2</name>
    <name type="synonym">COII</name>
    <name type="synonym">COX2</name>
    <name type="synonym">COXII</name>
    <name type="synonym">MTCO2</name>
</gene>
<feature type="chain" id="PRO_0000183606" description="Cytochrome c oxidase subunit 2">
    <location>
        <begin position="1"/>
        <end position="227"/>
    </location>
</feature>
<feature type="topological domain" description="Mitochondrial intermembrane" evidence="3">
    <location>
        <begin position="1"/>
        <end position="14"/>
    </location>
</feature>
<feature type="transmembrane region" description="Helical; Name=I" evidence="3">
    <location>
        <begin position="15"/>
        <end position="45"/>
    </location>
</feature>
<feature type="topological domain" description="Mitochondrial matrix" evidence="3">
    <location>
        <begin position="46"/>
        <end position="59"/>
    </location>
</feature>
<feature type="transmembrane region" description="Helical; Name=II" evidence="3">
    <location>
        <begin position="60"/>
        <end position="87"/>
    </location>
</feature>
<feature type="topological domain" description="Mitochondrial intermembrane" evidence="3">
    <location>
        <begin position="88"/>
        <end position="227"/>
    </location>
</feature>
<feature type="binding site" evidence="3">
    <location>
        <position position="161"/>
    </location>
    <ligand>
        <name>Cu cation</name>
        <dbReference type="ChEBI" id="CHEBI:23378"/>
        <label>A1</label>
    </ligand>
</feature>
<feature type="binding site" evidence="3">
    <location>
        <position position="196"/>
    </location>
    <ligand>
        <name>Cu cation</name>
        <dbReference type="ChEBI" id="CHEBI:23378"/>
        <label>A1</label>
    </ligand>
</feature>
<feature type="binding site" evidence="3">
    <location>
        <position position="196"/>
    </location>
    <ligand>
        <name>Cu cation</name>
        <dbReference type="ChEBI" id="CHEBI:23378"/>
        <label>A2</label>
    </ligand>
</feature>
<feature type="binding site" evidence="3">
    <location>
        <position position="198"/>
    </location>
    <ligand>
        <name>Cu cation</name>
        <dbReference type="ChEBI" id="CHEBI:23378"/>
        <label>A2</label>
    </ligand>
</feature>
<feature type="binding site" evidence="3">
    <location>
        <position position="198"/>
    </location>
    <ligand>
        <name>Mg(2+)</name>
        <dbReference type="ChEBI" id="CHEBI:18420"/>
        <note>ligand shared with MT-CO1</note>
    </ligand>
</feature>
<feature type="binding site" evidence="3">
    <location>
        <position position="200"/>
    </location>
    <ligand>
        <name>Cu cation</name>
        <dbReference type="ChEBI" id="CHEBI:23378"/>
        <label>A1</label>
    </ligand>
</feature>
<feature type="binding site" evidence="3">
    <location>
        <position position="200"/>
    </location>
    <ligand>
        <name>Cu cation</name>
        <dbReference type="ChEBI" id="CHEBI:23378"/>
        <label>A2</label>
    </ligand>
</feature>
<feature type="binding site" evidence="3">
    <location>
        <position position="204"/>
    </location>
    <ligand>
        <name>Cu cation</name>
        <dbReference type="ChEBI" id="CHEBI:23378"/>
        <label>A2</label>
    </ligand>
</feature>
<feature type="binding site" evidence="3">
    <location>
        <position position="207"/>
    </location>
    <ligand>
        <name>Cu cation</name>
        <dbReference type="ChEBI" id="CHEBI:23378"/>
        <label>A1</label>
    </ligand>
</feature>
<comment type="function">
    <text evidence="2">Component of the cytochrome c oxidase, the last enzyme in the mitochondrial electron transport chain which drives oxidative phosphorylation. The respiratory chain contains 3 multisubunit complexes succinate dehydrogenase (complex II, CII), ubiquinol-cytochrome c oxidoreductase (cytochrome b-c1 complex, complex III, CIII) and cytochrome c oxidase (complex IV, CIV), that cooperate to transfer electrons derived from NADH and succinate to molecular oxygen, creating an electrochemical gradient over the inner membrane that drives transmembrane transport and the ATP synthase. Cytochrome c oxidase is the component of the respiratory chain that catalyzes the reduction of oxygen to water. Electrons originating from reduced cytochrome c in the intermembrane space (IMS) are transferred via the dinuclear copper A center (CU(A)) of subunit 2 and heme A of subunit 1 to the active site in subunit 1, a binuclear center (BNC) formed by heme A3 and copper B (CU(B)). The BNC reduces molecular oxygen to 2 water molecules using 4 electrons from cytochrome c in the IMS and 4 protons from the mitochondrial matrix.</text>
</comment>
<comment type="catalytic activity">
    <reaction evidence="2">
        <text>4 Fe(II)-[cytochrome c] + O2 + 8 H(+)(in) = 4 Fe(III)-[cytochrome c] + 2 H2O + 4 H(+)(out)</text>
        <dbReference type="Rhea" id="RHEA:11436"/>
        <dbReference type="Rhea" id="RHEA-COMP:10350"/>
        <dbReference type="Rhea" id="RHEA-COMP:14399"/>
        <dbReference type="ChEBI" id="CHEBI:15377"/>
        <dbReference type="ChEBI" id="CHEBI:15378"/>
        <dbReference type="ChEBI" id="CHEBI:15379"/>
        <dbReference type="ChEBI" id="CHEBI:29033"/>
        <dbReference type="ChEBI" id="CHEBI:29034"/>
        <dbReference type="EC" id="7.1.1.9"/>
    </reaction>
    <physiologicalReaction direction="left-to-right" evidence="2">
        <dbReference type="Rhea" id="RHEA:11437"/>
    </physiologicalReaction>
</comment>
<comment type="cofactor">
    <cofactor evidence="3">
        <name>Cu cation</name>
        <dbReference type="ChEBI" id="CHEBI:23378"/>
    </cofactor>
    <text evidence="3">Binds a dinuclear copper A center per subunit.</text>
</comment>
<comment type="subunit">
    <text evidence="1 3">Component of the cytochrome c oxidase (complex IV, CIV), a multisubunit enzyme composed of 14 subunits. The complex is composed of a catalytic core of 3 subunits MT-CO1, MT-CO2 and MT-CO3, encoded in the mitochondrial DNA, and 11 supernumerary subunits COX4I, COX5A, COX5B, COX6A, COX6B, COX6C, COX7A, COX7B, COX7C, COX8 and NDUFA4, which are encoded in the nuclear genome. The complex exists as a monomer or a dimer and forms supercomplexes (SCs) in the inner mitochondrial membrane with NADH-ubiquinone oxidoreductase (complex I, CI) and ubiquinol-cytochrome c oxidoreductase (cytochrome b-c1 complex, complex III, CIII), resulting in different assemblies (supercomplex SCI(1)III(2)IV(1) and megacomplex MCI(2)III(2)IV(2)) (By similarity). Found in a complex with TMEM177, COA6, COX18, COX20, SCO1 and SCO2. Interacts with TMEM177 in a COX20-dependent manner. Interacts with COX20. Interacts with COX16 (By similarity).</text>
</comment>
<comment type="subcellular location">
    <subcellularLocation>
        <location evidence="3">Mitochondrion inner membrane</location>
        <topology evidence="3">Multi-pass membrane protein</topology>
    </subcellularLocation>
</comment>
<comment type="similarity">
    <text evidence="4">Belongs to the cytochrome c oxidase subunit 2 family.</text>
</comment>
<sequence length="227" mass="26047">MAYPLQMGLQDATSPIMEELLHFHDHTLMIVFLISSLVLYIISLMLTTKLTHTSTMDAQEVETVWTILPAIILILIALPSLRILYMMDEINNPSLTVKTMGHQWYWSYEYTDYEDLNFDSYMIPTQELKPGELRLLEVDNRVVLPMEMTIRMLISSEDVLHSWAVPSLGLKTDAIPGRLNQTTLMAMRPGLYYGQCSEICGSNHSFMPIVLELVPLSHFEKWSTSML</sequence>